<sequence>MTKKLHIKTWGCQMNEYDSSKMADLLDATHGYQLTEVAEEADVLLLNTCSIREKAQEKVFHQLGRWKLLKEKNPDLIIGVGGCVASQEGDHIRQRAHYVDIIFGPQTLHRLPEMINAVRGNRSPVVDISFPEIEKFDRLPEPRADGPTAFVSIMEGCNKYCTYCVVPYTRGEEVSRPCDDILFEIAQLAAQGVREVNLLGQNVNAWRGENYDGTTGSFADLLRLVAAIDGIDRIRFTTSHPIEFTDDIIEVYRDTPELVSFLHLPVQSGSDRVLNLMGRTHTALEYKAIIRKLREARPDIQISSDFIVGFPGETTDDFEKTMKLIADVNFDMSYSFIFSARPGTPAADMVDDVPEEDKKQRLYILQERINQQAMAWSRRMLGTVQRILVEGTSRKSLMELSGRTENNRVVNFEGTPDMVGKFVDVEIVDVYTNSLRGKIVRTEAEMGLRIAESPESVIARTRKENDLGVGIYQP</sequence>
<accession>B5XZQ0</accession>
<name>MIAB_KLEP3</name>
<reference key="1">
    <citation type="journal article" date="2008" name="PLoS Genet.">
        <title>Complete genome sequence of the N2-fixing broad host range endophyte Klebsiella pneumoniae 342 and virulence predictions verified in mice.</title>
        <authorList>
            <person name="Fouts D.E."/>
            <person name="Tyler H.L."/>
            <person name="DeBoy R.T."/>
            <person name="Daugherty S."/>
            <person name="Ren Q."/>
            <person name="Badger J.H."/>
            <person name="Durkin A.S."/>
            <person name="Huot H."/>
            <person name="Shrivastava S."/>
            <person name="Kothari S."/>
            <person name="Dodson R.J."/>
            <person name="Mohamoud Y."/>
            <person name="Khouri H."/>
            <person name="Roesch L.F.W."/>
            <person name="Krogfelt K.A."/>
            <person name="Struve C."/>
            <person name="Triplett E.W."/>
            <person name="Methe B.A."/>
        </authorList>
    </citation>
    <scope>NUCLEOTIDE SEQUENCE [LARGE SCALE GENOMIC DNA]</scope>
    <source>
        <strain>342</strain>
    </source>
</reference>
<gene>
    <name evidence="1" type="primary">miaB</name>
    <name type="ordered locus">KPK_3887</name>
</gene>
<organism>
    <name type="scientific">Klebsiella pneumoniae (strain 342)</name>
    <dbReference type="NCBI Taxonomy" id="507522"/>
    <lineage>
        <taxon>Bacteria</taxon>
        <taxon>Pseudomonadati</taxon>
        <taxon>Pseudomonadota</taxon>
        <taxon>Gammaproteobacteria</taxon>
        <taxon>Enterobacterales</taxon>
        <taxon>Enterobacteriaceae</taxon>
        <taxon>Klebsiella/Raoultella group</taxon>
        <taxon>Klebsiella</taxon>
        <taxon>Klebsiella pneumoniae complex</taxon>
    </lineage>
</organism>
<feature type="chain" id="PRO_0000374349" description="tRNA-2-methylthio-N(6)-dimethylallyladenosine synthase">
    <location>
        <begin position="1"/>
        <end position="474"/>
    </location>
</feature>
<feature type="domain" description="MTTase N-terminal" evidence="1">
    <location>
        <begin position="3"/>
        <end position="120"/>
    </location>
</feature>
<feature type="domain" description="Radical SAM core" evidence="2">
    <location>
        <begin position="143"/>
        <end position="375"/>
    </location>
</feature>
<feature type="domain" description="TRAM" evidence="1">
    <location>
        <begin position="378"/>
        <end position="441"/>
    </location>
</feature>
<feature type="binding site" evidence="1">
    <location>
        <position position="12"/>
    </location>
    <ligand>
        <name>[4Fe-4S] cluster</name>
        <dbReference type="ChEBI" id="CHEBI:49883"/>
        <label>1</label>
    </ligand>
</feature>
<feature type="binding site" evidence="1">
    <location>
        <position position="49"/>
    </location>
    <ligand>
        <name>[4Fe-4S] cluster</name>
        <dbReference type="ChEBI" id="CHEBI:49883"/>
        <label>1</label>
    </ligand>
</feature>
<feature type="binding site" evidence="1">
    <location>
        <position position="83"/>
    </location>
    <ligand>
        <name>[4Fe-4S] cluster</name>
        <dbReference type="ChEBI" id="CHEBI:49883"/>
        <label>1</label>
    </ligand>
</feature>
<feature type="binding site" evidence="1">
    <location>
        <position position="157"/>
    </location>
    <ligand>
        <name>[4Fe-4S] cluster</name>
        <dbReference type="ChEBI" id="CHEBI:49883"/>
        <label>2</label>
        <note>4Fe-4S-S-AdoMet</note>
    </ligand>
</feature>
<feature type="binding site" evidence="1">
    <location>
        <position position="161"/>
    </location>
    <ligand>
        <name>[4Fe-4S] cluster</name>
        <dbReference type="ChEBI" id="CHEBI:49883"/>
        <label>2</label>
        <note>4Fe-4S-S-AdoMet</note>
    </ligand>
</feature>
<feature type="binding site" evidence="1">
    <location>
        <position position="164"/>
    </location>
    <ligand>
        <name>[4Fe-4S] cluster</name>
        <dbReference type="ChEBI" id="CHEBI:49883"/>
        <label>2</label>
        <note>4Fe-4S-S-AdoMet</note>
    </ligand>
</feature>
<proteinExistence type="inferred from homology"/>
<comment type="function">
    <text evidence="1">Catalyzes the methylthiolation of N6-(dimethylallyl)adenosine (i(6)A), leading to the formation of 2-methylthio-N6-(dimethylallyl)adenosine (ms(2)i(6)A) at position 37 in tRNAs that read codons beginning with uridine.</text>
</comment>
<comment type="catalytic activity">
    <reaction evidence="1">
        <text>N(6)-dimethylallyladenosine(37) in tRNA + (sulfur carrier)-SH + AH2 + 2 S-adenosyl-L-methionine = 2-methylsulfanyl-N(6)-dimethylallyladenosine(37) in tRNA + (sulfur carrier)-H + 5'-deoxyadenosine + L-methionine + A + S-adenosyl-L-homocysteine + 2 H(+)</text>
        <dbReference type="Rhea" id="RHEA:37067"/>
        <dbReference type="Rhea" id="RHEA-COMP:10375"/>
        <dbReference type="Rhea" id="RHEA-COMP:10376"/>
        <dbReference type="Rhea" id="RHEA-COMP:14737"/>
        <dbReference type="Rhea" id="RHEA-COMP:14739"/>
        <dbReference type="ChEBI" id="CHEBI:13193"/>
        <dbReference type="ChEBI" id="CHEBI:15378"/>
        <dbReference type="ChEBI" id="CHEBI:17319"/>
        <dbReference type="ChEBI" id="CHEBI:17499"/>
        <dbReference type="ChEBI" id="CHEBI:29917"/>
        <dbReference type="ChEBI" id="CHEBI:57844"/>
        <dbReference type="ChEBI" id="CHEBI:57856"/>
        <dbReference type="ChEBI" id="CHEBI:59789"/>
        <dbReference type="ChEBI" id="CHEBI:64428"/>
        <dbReference type="ChEBI" id="CHEBI:74415"/>
        <dbReference type="ChEBI" id="CHEBI:74417"/>
        <dbReference type="EC" id="2.8.4.3"/>
    </reaction>
</comment>
<comment type="cofactor">
    <cofactor evidence="1">
        <name>[4Fe-4S] cluster</name>
        <dbReference type="ChEBI" id="CHEBI:49883"/>
    </cofactor>
    <text evidence="1">Binds 2 [4Fe-4S] clusters. One cluster is coordinated with 3 cysteines and an exchangeable S-adenosyl-L-methionine.</text>
</comment>
<comment type="subunit">
    <text evidence="1">Monomer.</text>
</comment>
<comment type="subcellular location">
    <subcellularLocation>
        <location evidence="1">Cytoplasm</location>
    </subcellularLocation>
</comment>
<comment type="similarity">
    <text evidence="1">Belongs to the methylthiotransferase family. MiaB subfamily.</text>
</comment>
<keyword id="KW-0004">4Fe-4S</keyword>
<keyword id="KW-0963">Cytoplasm</keyword>
<keyword id="KW-0408">Iron</keyword>
<keyword id="KW-0411">Iron-sulfur</keyword>
<keyword id="KW-0479">Metal-binding</keyword>
<keyword id="KW-0949">S-adenosyl-L-methionine</keyword>
<keyword id="KW-0808">Transferase</keyword>
<keyword id="KW-0819">tRNA processing</keyword>
<evidence type="ECO:0000255" key="1">
    <source>
        <dbReference type="HAMAP-Rule" id="MF_01864"/>
    </source>
</evidence>
<evidence type="ECO:0000255" key="2">
    <source>
        <dbReference type="PROSITE-ProRule" id="PRU01266"/>
    </source>
</evidence>
<protein>
    <recommendedName>
        <fullName evidence="1">tRNA-2-methylthio-N(6)-dimethylallyladenosine synthase</fullName>
        <ecNumber evidence="1">2.8.4.3</ecNumber>
    </recommendedName>
    <alternativeName>
        <fullName evidence="1">(Dimethylallyl)adenosine tRNA methylthiotransferase MiaB</fullName>
    </alternativeName>
    <alternativeName>
        <fullName evidence="1">tRNA-i(6)A37 methylthiotransferase</fullName>
    </alternativeName>
</protein>
<dbReference type="EC" id="2.8.4.3" evidence="1"/>
<dbReference type="EMBL" id="CP000964">
    <property type="protein sequence ID" value="ACI09011.1"/>
    <property type="molecule type" value="Genomic_DNA"/>
</dbReference>
<dbReference type="SMR" id="B5XZQ0"/>
<dbReference type="KEGG" id="kpe:KPK_3887"/>
<dbReference type="HOGENOM" id="CLU_018697_2_0_6"/>
<dbReference type="Proteomes" id="UP000001734">
    <property type="component" value="Chromosome"/>
</dbReference>
<dbReference type="GO" id="GO:0005829">
    <property type="term" value="C:cytosol"/>
    <property type="evidence" value="ECO:0007669"/>
    <property type="project" value="TreeGrafter"/>
</dbReference>
<dbReference type="GO" id="GO:0051539">
    <property type="term" value="F:4 iron, 4 sulfur cluster binding"/>
    <property type="evidence" value="ECO:0007669"/>
    <property type="project" value="UniProtKB-UniRule"/>
</dbReference>
<dbReference type="GO" id="GO:0046872">
    <property type="term" value="F:metal ion binding"/>
    <property type="evidence" value="ECO:0007669"/>
    <property type="project" value="UniProtKB-KW"/>
</dbReference>
<dbReference type="GO" id="GO:0035597">
    <property type="term" value="F:N6-isopentenyladenosine methylthiotransferase activity"/>
    <property type="evidence" value="ECO:0007669"/>
    <property type="project" value="TreeGrafter"/>
</dbReference>
<dbReference type="CDD" id="cd01335">
    <property type="entry name" value="Radical_SAM"/>
    <property type="match status" value="1"/>
</dbReference>
<dbReference type="FunFam" id="3.40.50.12160:FF:000001">
    <property type="entry name" value="tRNA-2-methylthio-N(6)-dimethylallyladenosine synthase"/>
    <property type="match status" value="1"/>
</dbReference>
<dbReference type="FunFam" id="3.80.30.20:FF:000001">
    <property type="entry name" value="tRNA-2-methylthio-N(6)-dimethylallyladenosine synthase 2"/>
    <property type="match status" value="1"/>
</dbReference>
<dbReference type="Gene3D" id="3.40.50.12160">
    <property type="entry name" value="Methylthiotransferase, N-terminal domain"/>
    <property type="match status" value="1"/>
</dbReference>
<dbReference type="Gene3D" id="3.80.30.20">
    <property type="entry name" value="tm_1862 like domain"/>
    <property type="match status" value="1"/>
</dbReference>
<dbReference type="HAMAP" id="MF_01864">
    <property type="entry name" value="tRNA_metthiotr_MiaB"/>
    <property type="match status" value="1"/>
</dbReference>
<dbReference type="InterPro" id="IPR006638">
    <property type="entry name" value="Elp3/MiaA/NifB-like_rSAM"/>
</dbReference>
<dbReference type="InterPro" id="IPR005839">
    <property type="entry name" value="Methylthiotransferase"/>
</dbReference>
<dbReference type="InterPro" id="IPR020612">
    <property type="entry name" value="Methylthiotransferase_CS"/>
</dbReference>
<dbReference type="InterPro" id="IPR013848">
    <property type="entry name" value="Methylthiotransferase_N"/>
</dbReference>
<dbReference type="InterPro" id="IPR038135">
    <property type="entry name" value="Methylthiotransferase_N_sf"/>
</dbReference>
<dbReference type="InterPro" id="IPR006463">
    <property type="entry name" value="MiaB_methiolase"/>
</dbReference>
<dbReference type="InterPro" id="IPR007197">
    <property type="entry name" value="rSAM"/>
</dbReference>
<dbReference type="InterPro" id="IPR023404">
    <property type="entry name" value="rSAM_horseshoe"/>
</dbReference>
<dbReference type="InterPro" id="IPR002792">
    <property type="entry name" value="TRAM_dom"/>
</dbReference>
<dbReference type="NCBIfam" id="TIGR01574">
    <property type="entry name" value="miaB-methiolase"/>
    <property type="match status" value="1"/>
</dbReference>
<dbReference type="NCBIfam" id="TIGR00089">
    <property type="entry name" value="MiaB/RimO family radical SAM methylthiotransferase"/>
    <property type="match status" value="1"/>
</dbReference>
<dbReference type="PANTHER" id="PTHR43020">
    <property type="entry name" value="CDK5 REGULATORY SUBUNIT-ASSOCIATED PROTEIN 1"/>
    <property type="match status" value="1"/>
</dbReference>
<dbReference type="PANTHER" id="PTHR43020:SF2">
    <property type="entry name" value="MITOCHONDRIAL TRNA METHYLTHIOTRANSFERASE CDK5RAP1"/>
    <property type="match status" value="1"/>
</dbReference>
<dbReference type="Pfam" id="PF04055">
    <property type="entry name" value="Radical_SAM"/>
    <property type="match status" value="1"/>
</dbReference>
<dbReference type="Pfam" id="PF01938">
    <property type="entry name" value="TRAM"/>
    <property type="match status" value="1"/>
</dbReference>
<dbReference type="Pfam" id="PF00919">
    <property type="entry name" value="UPF0004"/>
    <property type="match status" value="1"/>
</dbReference>
<dbReference type="SFLD" id="SFLDF00273">
    <property type="entry name" value="(dimethylallyl)adenosine_tRNA"/>
    <property type="match status" value="1"/>
</dbReference>
<dbReference type="SFLD" id="SFLDG01082">
    <property type="entry name" value="B12-binding_domain_containing"/>
    <property type="match status" value="1"/>
</dbReference>
<dbReference type="SFLD" id="SFLDG01061">
    <property type="entry name" value="methylthiotransferase"/>
    <property type="match status" value="1"/>
</dbReference>
<dbReference type="SMART" id="SM00729">
    <property type="entry name" value="Elp3"/>
    <property type="match status" value="1"/>
</dbReference>
<dbReference type="SUPFAM" id="SSF102114">
    <property type="entry name" value="Radical SAM enzymes"/>
    <property type="match status" value="1"/>
</dbReference>
<dbReference type="PROSITE" id="PS51449">
    <property type="entry name" value="MTTASE_N"/>
    <property type="match status" value="1"/>
</dbReference>
<dbReference type="PROSITE" id="PS01278">
    <property type="entry name" value="MTTASE_RADICAL"/>
    <property type="match status" value="1"/>
</dbReference>
<dbReference type="PROSITE" id="PS51918">
    <property type="entry name" value="RADICAL_SAM"/>
    <property type="match status" value="1"/>
</dbReference>
<dbReference type="PROSITE" id="PS50926">
    <property type="entry name" value="TRAM"/>
    <property type="match status" value="1"/>
</dbReference>